<dbReference type="EC" id="2.8.1.10" evidence="1"/>
<dbReference type="EMBL" id="BA000004">
    <property type="protein sequence ID" value="BAB05152.1"/>
    <property type="status" value="ALT_INIT"/>
    <property type="molecule type" value="Genomic_DNA"/>
</dbReference>
<dbReference type="PIR" id="A83829">
    <property type="entry name" value="A83829"/>
</dbReference>
<dbReference type="RefSeq" id="WP_041821380.1">
    <property type="nucleotide sequence ID" value="NC_002570.2"/>
</dbReference>
<dbReference type="SMR" id="Q9KCY6"/>
<dbReference type="STRING" id="272558.gene:10727331"/>
<dbReference type="KEGG" id="bha:BH1433"/>
<dbReference type="eggNOG" id="COG2022">
    <property type="taxonomic scope" value="Bacteria"/>
</dbReference>
<dbReference type="HOGENOM" id="CLU_062233_1_0_9"/>
<dbReference type="OrthoDB" id="9805935at2"/>
<dbReference type="UniPathway" id="UPA00060"/>
<dbReference type="Proteomes" id="UP000001258">
    <property type="component" value="Chromosome"/>
</dbReference>
<dbReference type="GO" id="GO:0005737">
    <property type="term" value="C:cytoplasm"/>
    <property type="evidence" value="ECO:0007669"/>
    <property type="project" value="UniProtKB-SubCell"/>
</dbReference>
<dbReference type="GO" id="GO:1990107">
    <property type="term" value="F:thiazole synthase activity"/>
    <property type="evidence" value="ECO:0007669"/>
    <property type="project" value="UniProtKB-EC"/>
</dbReference>
<dbReference type="GO" id="GO:0009229">
    <property type="term" value="P:thiamine diphosphate biosynthetic process"/>
    <property type="evidence" value="ECO:0007669"/>
    <property type="project" value="UniProtKB-UniRule"/>
</dbReference>
<dbReference type="CDD" id="cd04728">
    <property type="entry name" value="ThiG"/>
    <property type="match status" value="1"/>
</dbReference>
<dbReference type="Gene3D" id="3.20.20.70">
    <property type="entry name" value="Aldolase class I"/>
    <property type="match status" value="1"/>
</dbReference>
<dbReference type="HAMAP" id="MF_00443">
    <property type="entry name" value="ThiG"/>
    <property type="match status" value="1"/>
</dbReference>
<dbReference type="InterPro" id="IPR013785">
    <property type="entry name" value="Aldolase_TIM"/>
</dbReference>
<dbReference type="InterPro" id="IPR033983">
    <property type="entry name" value="Thiazole_synthase_ThiG"/>
</dbReference>
<dbReference type="InterPro" id="IPR008867">
    <property type="entry name" value="ThiG"/>
</dbReference>
<dbReference type="PANTHER" id="PTHR34266">
    <property type="entry name" value="THIAZOLE SYNTHASE"/>
    <property type="match status" value="1"/>
</dbReference>
<dbReference type="PANTHER" id="PTHR34266:SF2">
    <property type="entry name" value="THIAZOLE SYNTHASE"/>
    <property type="match status" value="1"/>
</dbReference>
<dbReference type="Pfam" id="PF05690">
    <property type="entry name" value="ThiG"/>
    <property type="match status" value="1"/>
</dbReference>
<dbReference type="SUPFAM" id="SSF110399">
    <property type="entry name" value="ThiG-like"/>
    <property type="match status" value="1"/>
</dbReference>
<name>THIG_HALH5</name>
<organism>
    <name type="scientific">Halalkalibacterium halodurans (strain ATCC BAA-125 / DSM 18197 / FERM 7344 / JCM 9153 / C-125)</name>
    <name type="common">Bacillus halodurans</name>
    <dbReference type="NCBI Taxonomy" id="272558"/>
    <lineage>
        <taxon>Bacteria</taxon>
        <taxon>Bacillati</taxon>
        <taxon>Bacillota</taxon>
        <taxon>Bacilli</taxon>
        <taxon>Bacillales</taxon>
        <taxon>Bacillaceae</taxon>
        <taxon>Halalkalibacterium (ex Joshi et al. 2022)</taxon>
    </lineage>
</organism>
<protein>
    <recommendedName>
        <fullName evidence="1">Thiazole synthase</fullName>
        <ecNumber evidence="1">2.8.1.10</ecNumber>
    </recommendedName>
</protein>
<gene>
    <name evidence="1" type="primary">thiG</name>
    <name type="ordered locus">BH1433</name>
</gene>
<proteinExistence type="inferred from homology"/>
<accession>Q9KCY6</accession>
<reference key="1">
    <citation type="journal article" date="2000" name="Nucleic Acids Res.">
        <title>Complete genome sequence of the alkaliphilic bacterium Bacillus halodurans and genomic sequence comparison with Bacillus subtilis.</title>
        <authorList>
            <person name="Takami H."/>
            <person name="Nakasone K."/>
            <person name="Takaki Y."/>
            <person name="Maeno G."/>
            <person name="Sasaki R."/>
            <person name="Masui N."/>
            <person name="Fuji F."/>
            <person name="Hirama C."/>
            <person name="Nakamura Y."/>
            <person name="Ogasawara N."/>
            <person name="Kuhara S."/>
            <person name="Horikoshi K."/>
        </authorList>
    </citation>
    <scope>NUCLEOTIDE SEQUENCE [LARGE SCALE GENOMIC DNA]</scope>
    <source>
        <strain>ATCC BAA-125 / DSM 18197 / FERM 7344 / JCM 9153 / C-125</strain>
    </source>
</reference>
<comment type="function">
    <text evidence="1">Catalyzes the rearrangement of 1-deoxy-D-xylulose 5-phosphate (DXP) to produce the thiazole phosphate moiety of thiamine. Sulfur is provided by the thiocarboxylate moiety of the carrier protein ThiS. In vitro, sulfur can be provided by H(2)S.</text>
</comment>
<comment type="catalytic activity">
    <reaction evidence="1">
        <text>[ThiS sulfur-carrier protein]-C-terminal-Gly-aminoethanethioate + 2-iminoacetate + 1-deoxy-D-xylulose 5-phosphate = [ThiS sulfur-carrier protein]-C-terminal Gly-Gly + 2-[(2R,5Z)-2-carboxy-4-methylthiazol-5(2H)-ylidene]ethyl phosphate + 2 H2O + H(+)</text>
        <dbReference type="Rhea" id="RHEA:26297"/>
        <dbReference type="Rhea" id="RHEA-COMP:12909"/>
        <dbReference type="Rhea" id="RHEA-COMP:19908"/>
        <dbReference type="ChEBI" id="CHEBI:15377"/>
        <dbReference type="ChEBI" id="CHEBI:15378"/>
        <dbReference type="ChEBI" id="CHEBI:57792"/>
        <dbReference type="ChEBI" id="CHEBI:62899"/>
        <dbReference type="ChEBI" id="CHEBI:77846"/>
        <dbReference type="ChEBI" id="CHEBI:90778"/>
        <dbReference type="ChEBI" id="CHEBI:232372"/>
        <dbReference type="EC" id="2.8.1.10"/>
    </reaction>
</comment>
<comment type="pathway">
    <text evidence="1">Cofactor biosynthesis; thiamine diphosphate biosynthesis.</text>
</comment>
<comment type="subunit">
    <text evidence="1">Homotetramer. Forms heterodimers with either ThiH or ThiS.</text>
</comment>
<comment type="subcellular location">
    <subcellularLocation>
        <location evidence="1">Cytoplasm</location>
    </subcellularLocation>
</comment>
<comment type="similarity">
    <text evidence="1">Belongs to the ThiG family.</text>
</comment>
<comment type="sequence caution" evidence="2">
    <conflict type="erroneous initiation">
        <sequence resource="EMBL-CDS" id="BAB05152"/>
    </conflict>
</comment>
<feature type="chain" id="PRO_0000162784" description="Thiazole synthase">
    <location>
        <begin position="1"/>
        <end position="259"/>
    </location>
</feature>
<feature type="active site" description="Schiff-base intermediate with DXP" evidence="1">
    <location>
        <position position="100"/>
    </location>
</feature>
<feature type="binding site" evidence="1">
    <location>
        <position position="161"/>
    </location>
    <ligand>
        <name>1-deoxy-D-xylulose 5-phosphate</name>
        <dbReference type="ChEBI" id="CHEBI:57792"/>
    </ligand>
</feature>
<feature type="binding site" evidence="1">
    <location>
        <begin position="187"/>
        <end position="188"/>
    </location>
    <ligand>
        <name>1-deoxy-D-xylulose 5-phosphate</name>
        <dbReference type="ChEBI" id="CHEBI:57792"/>
    </ligand>
</feature>
<feature type="binding site" evidence="1">
    <location>
        <begin position="209"/>
        <end position="210"/>
    </location>
    <ligand>
        <name>1-deoxy-D-xylulose 5-phosphate</name>
        <dbReference type="ChEBI" id="CHEBI:57792"/>
    </ligand>
</feature>
<sequence>MKDLPLSIGGKTLTSRFFLGTGRYPNPFVQNEVIRVSEAEVLTFAIRRVNLQAPGEDAILQHLEGKTFTYLPNTSGAKNAEEAIRIARLARASGLSDWIKVEISVNERTLLPDPVETLRATETLANEGFTVLPYTSDDPVLCKRLEEAGAAAVMPGGAPIGTGLGILNPYNLGLIVEEANVPIIVDAGLGSAQDVVQAMELGADGVLMNTPVAKAKDPVKMALAMKHAIEAGRLSYLAGRIPKKRYATASSGLETFISK</sequence>
<keyword id="KW-0963">Cytoplasm</keyword>
<keyword id="KW-1185">Reference proteome</keyword>
<keyword id="KW-0704">Schiff base</keyword>
<keyword id="KW-0784">Thiamine biosynthesis</keyword>
<keyword id="KW-0808">Transferase</keyword>
<evidence type="ECO:0000255" key="1">
    <source>
        <dbReference type="HAMAP-Rule" id="MF_00443"/>
    </source>
</evidence>
<evidence type="ECO:0000305" key="2"/>